<sequence>MSKGKLEQVSAACHHLGFFNNAGLSAHYKLSESSSPAVADLRGLVYAAAGDLLRKHRILFAIPVNEGTPNPHFACLPWIDLRRSIAFLERSVPLASAAEEQDKELDAILEEQHNIDFQTDYGTLPFWRLIILRSKGRNDFTASFIYHHAIGDGVSGLAFHKAFCNALEAASSSTLPTDRAENIIRPDENTVVLPPLEELHPMPISPRQPPLPTASPKEWTGASIHLPCKSRWASLYISPSASNAFVQECKEMKLSVTSALSSVVAAVLFDNLPSRVEALTCIIPVSVRPWLKLPPQVIDNAIGTYFDALRVRLTRAEQRSQDPSPVGIWCGARQVSRSINAYLCDVSPSGEPYTSVAAFKTVPDVSAVFRSTLGKPRDAAFEVTNVGLFPPAAIRRPSRWKAGNVLLSRSAAVPGAAVTVSVVTGRDGTMALGFSWQEGVVEDGFMHRVRQGVWKYFEKYQS</sequence>
<proteinExistence type="evidence at transcript level"/>
<organism>
    <name type="scientific">Aspergillus fumigatus (strain ATCC MYA-4609 / CBS 101355 / FGSC A1100 / Af293)</name>
    <name type="common">Neosartorya fumigata</name>
    <dbReference type="NCBI Taxonomy" id="330879"/>
    <lineage>
        <taxon>Eukaryota</taxon>
        <taxon>Fungi</taxon>
        <taxon>Dikarya</taxon>
        <taxon>Ascomycota</taxon>
        <taxon>Pezizomycotina</taxon>
        <taxon>Eurotiomycetes</taxon>
        <taxon>Eurotiomycetidae</taxon>
        <taxon>Eurotiales</taxon>
        <taxon>Aspergillaceae</taxon>
        <taxon>Aspergillus</taxon>
        <taxon>Aspergillus subgen. Fumigati</taxon>
    </lineage>
</organism>
<reference key="1">
    <citation type="journal article" date="2005" name="Nature">
        <title>Genomic sequence of the pathogenic and allergenic filamentous fungus Aspergillus fumigatus.</title>
        <authorList>
            <person name="Nierman W.C."/>
            <person name="Pain A."/>
            <person name="Anderson M.J."/>
            <person name="Wortman J.R."/>
            <person name="Kim H.S."/>
            <person name="Arroyo J."/>
            <person name="Berriman M."/>
            <person name="Abe K."/>
            <person name="Archer D.B."/>
            <person name="Bermejo C."/>
            <person name="Bennett J.W."/>
            <person name="Bowyer P."/>
            <person name="Chen D."/>
            <person name="Collins M."/>
            <person name="Coulsen R."/>
            <person name="Davies R."/>
            <person name="Dyer P.S."/>
            <person name="Farman M.L."/>
            <person name="Fedorova N."/>
            <person name="Fedorova N.D."/>
            <person name="Feldblyum T.V."/>
            <person name="Fischer R."/>
            <person name="Fosker N."/>
            <person name="Fraser A."/>
            <person name="Garcia J.L."/>
            <person name="Garcia M.J."/>
            <person name="Goble A."/>
            <person name="Goldman G.H."/>
            <person name="Gomi K."/>
            <person name="Griffith-Jones S."/>
            <person name="Gwilliam R."/>
            <person name="Haas B.J."/>
            <person name="Haas H."/>
            <person name="Harris D.E."/>
            <person name="Horiuchi H."/>
            <person name="Huang J."/>
            <person name="Humphray S."/>
            <person name="Jimenez J."/>
            <person name="Keller N."/>
            <person name="Khouri H."/>
            <person name="Kitamoto K."/>
            <person name="Kobayashi T."/>
            <person name="Konzack S."/>
            <person name="Kulkarni R."/>
            <person name="Kumagai T."/>
            <person name="Lafton A."/>
            <person name="Latge J.-P."/>
            <person name="Li W."/>
            <person name="Lord A."/>
            <person name="Lu C."/>
            <person name="Majoros W.H."/>
            <person name="May G.S."/>
            <person name="Miller B.L."/>
            <person name="Mohamoud Y."/>
            <person name="Molina M."/>
            <person name="Monod M."/>
            <person name="Mouyna I."/>
            <person name="Mulligan S."/>
            <person name="Murphy L.D."/>
            <person name="O'Neil S."/>
            <person name="Paulsen I."/>
            <person name="Penalva M.A."/>
            <person name="Pertea M."/>
            <person name="Price C."/>
            <person name="Pritchard B.L."/>
            <person name="Quail M.A."/>
            <person name="Rabbinowitsch E."/>
            <person name="Rawlins N."/>
            <person name="Rajandream M.A."/>
            <person name="Reichard U."/>
            <person name="Renauld H."/>
            <person name="Robson G.D."/>
            <person name="Rodriguez de Cordoba S."/>
            <person name="Rodriguez-Pena J.M."/>
            <person name="Ronning C.M."/>
            <person name="Rutter S."/>
            <person name="Salzberg S.L."/>
            <person name="Sanchez M."/>
            <person name="Sanchez-Ferrero J.C."/>
            <person name="Saunders D."/>
            <person name="Seeger K."/>
            <person name="Squares R."/>
            <person name="Squares S."/>
            <person name="Takeuchi M."/>
            <person name="Tekaia F."/>
            <person name="Turner G."/>
            <person name="Vazquez de Aldana C.R."/>
            <person name="Weidman J."/>
            <person name="White O."/>
            <person name="Woodward J.R."/>
            <person name="Yu J.-H."/>
            <person name="Fraser C.M."/>
            <person name="Galagan J.E."/>
            <person name="Asai K."/>
            <person name="Machida M."/>
            <person name="Hall N."/>
            <person name="Barrell B.G."/>
            <person name="Denning D.W."/>
        </authorList>
    </citation>
    <scope>NUCLEOTIDE SEQUENCE [LARGE SCALE GENOMIC DNA]</scope>
    <source>
        <strain>ATCC MYA-4609 / CBS 101355 / FGSC A1100 / Af293</strain>
    </source>
</reference>
<reference key="2">
    <citation type="journal article" date="2018" name="MBio">
        <title>Fungal isocyanide synthases and xanthocillin biosynthesis in Aspergillus fumigatus.</title>
        <authorList>
            <person name="Lim F.Y."/>
            <person name="Won T.H."/>
            <person name="Raffa N."/>
            <person name="Baccile J.A."/>
            <person name="Wisecaver J."/>
            <person name="Rokas A."/>
            <person name="Schroeder F.C."/>
            <person name="Keller N.P."/>
        </authorList>
    </citation>
    <scope>FUNCTION</scope>
    <scope>INDUCTION</scope>
    <scope>PATHWAY</scope>
</reference>
<reference key="3">
    <citation type="journal article" date="2022" name="Nat. Commun.">
        <title>Copper starvation induces antimicrobial isocyanide integrated into two distinct biosynthetic pathways in fungi.</title>
        <authorList>
            <person name="Won T.H."/>
            <person name="Bok J.W."/>
            <person name="Nadig N."/>
            <person name="Venkatesh N."/>
            <person name="Nickles G."/>
            <person name="Greco C."/>
            <person name="Lim F.Y."/>
            <person name="Gonzalez J.B."/>
            <person name="Turgeon B.G."/>
            <person name="Keller N.P."/>
            <person name="Schroeder F.C."/>
        </authorList>
    </citation>
    <scope>FUNCTION</scope>
    <scope>DISRUPTION PHENOTYPE</scope>
</reference>
<protein>
    <recommendedName>
        <fullName evidence="3">Probable alcohol acetyltransferase crmB</fullName>
        <ecNumber evidence="5">2.3.1.-</ecNumber>
    </recommendedName>
    <alternativeName>
        <fullName evidence="3">Copper-responsive metabolite biosynthesis cluster protein A</fullName>
    </alternativeName>
</protein>
<feature type="chain" id="PRO_0000445299" description="Probable alcohol acetyltransferase crmB">
    <location>
        <begin position="1"/>
        <end position="462"/>
    </location>
</feature>
<name>CRMB_ASPFU</name>
<comment type="function">
    <text evidence="1 2">Probable alcohol acetyltransferase; part of the crm gene cluster that mediates the biosynthesis of a yet unidentified copper-responsive metabolite (PubMed:29844112). In contrast to crmA, is not involved in the biosynthesis of fumivalines or fumicicolins (PubMed:35973982).</text>
</comment>
<comment type="pathway">
    <text evidence="5">Secondary metabolite biosynthesis.</text>
</comment>
<comment type="induction">
    <text evidence="1">Expressed in copper depleted conditions via the regulation of the macA transcription factor.</text>
</comment>
<comment type="disruption phenotype">
    <text evidence="1 2">Does not affect the production of fumivalines and fumicicolins.</text>
</comment>
<comment type="similarity">
    <text evidence="4">Belongs to the alcohol acetyltransferase FCK4 family.</text>
</comment>
<accession>Q4WYN5</accession>
<gene>
    <name evidence="3" type="primary">crmB</name>
    <name type="ORF">AFUA_3G13680</name>
</gene>
<dbReference type="EC" id="2.3.1.-" evidence="5"/>
<dbReference type="EMBL" id="AAHF01000002">
    <property type="protein sequence ID" value="EAL92218.1"/>
    <property type="molecule type" value="Genomic_DNA"/>
</dbReference>
<dbReference type="RefSeq" id="XP_754256.1">
    <property type="nucleotide sequence ID" value="XM_749163.1"/>
</dbReference>
<dbReference type="SMR" id="Q4WYN5"/>
<dbReference type="EnsemblFungi" id="EAL92218">
    <property type="protein sequence ID" value="EAL92218"/>
    <property type="gene ID" value="AFUA_3G13680"/>
</dbReference>
<dbReference type="GeneID" id="3512309"/>
<dbReference type="KEGG" id="afm:AFUA_3G13680"/>
<dbReference type="eggNOG" id="ENOG502RC91">
    <property type="taxonomic scope" value="Eukaryota"/>
</dbReference>
<dbReference type="HOGENOM" id="CLU_024469_1_1_1"/>
<dbReference type="InParanoid" id="Q4WYN5"/>
<dbReference type="OMA" id="LEDQHNT"/>
<dbReference type="OrthoDB" id="2150604at2759"/>
<dbReference type="Proteomes" id="UP000002530">
    <property type="component" value="Chromosome 3"/>
</dbReference>
<dbReference type="GO" id="GO:0008080">
    <property type="term" value="F:N-acetyltransferase activity"/>
    <property type="evidence" value="ECO:0000318"/>
    <property type="project" value="GO_Central"/>
</dbReference>
<dbReference type="Gene3D" id="3.30.559.10">
    <property type="entry name" value="Chloramphenicol acetyltransferase-like domain"/>
    <property type="match status" value="1"/>
</dbReference>
<dbReference type="InterPro" id="IPR052058">
    <property type="entry name" value="Alcohol_O-acetyltransferase"/>
</dbReference>
<dbReference type="InterPro" id="IPR010828">
    <property type="entry name" value="Atf2/Sli1-like"/>
</dbReference>
<dbReference type="InterPro" id="IPR023213">
    <property type="entry name" value="CAT-like_dom_sf"/>
</dbReference>
<dbReference type="PANTHER" id="PTHR28037">
    <property type="entry name" value="ALCOHOL O-ACETYLTRANSFERASE 1-RELATED"/>
    <property type="match status" value="1"/>
</dbReference>
<dbReference type="PANTHER" id="PTHR28037:SF1">
    <property type="entry name" value="ALCOHOL O-ACETYLTRANSFERASE 1-RELATED"/>
    <property type="match status" value="1"/>
</dbReference>
<dbReference type="Pfam" id="PF07247">
    <property type="entry name" value="AATase"/>
    <property type="match status" value="1"/>
</dbReference>
<dbReference type="SUPFAM" id="SSF52777">
    <property type="entry name" value="CoA-dependent acyltransferases"/>
    <property type="match status" value="2"/>
</dbReference>
<evidence type="ECO:0000269" key="1">
    <source>
    </source>
</evidence>
<evidence type="ECO:0000269" key="2">
    <source>
    </source>
</evidence>
<evidence type="ECO:0000303" key="3">
    <source>
    </source>
</evidence>
<evidence type="ECO:0000305" key="4"/>
<evidence type="ECO:0000305" key="5">
    <source>
    </source>
</evidence>
<keyword id="KW-1185">Reference proteome</keyword>
<keyword id="KW-0808">Transferase</keyword>